<reference key="1">
    <citation type="journal article" date="2003" name="J. Gen. Virol.">
        <title>Novel structure of the genome of Rice yellow stunt virus: identification of the gene 6-encoded virion protein.</title>
        <authorList>
            <person name="Huang Y."/>
            <person name="Zhao H."/>
            <person name="Luo Z."/>
            <person name="Chen X."/>
            <person name="Fang R.X."/>
        </authorList>
    </citation>
    <scope>NUCLEOTIDE SEQUENCE [GENOMIC RNA]</scope>
    <scope>CHARACTERIZATION</scope>
</reference>
<evidence type="ECO:0000256" key="1">
    <source>
        <dbReference type="SAM" id="MobiDB-lite"/>
    </source>
</evidence>
<dbReference type="EMBL" id="AB011257">
    <property type="protein sequence ID" value="BAA25159.1"/>
    <property type="molecule type" value="Genomic_RNA"/>
</dbReference>
<dbReference type="RefSeq" id="NP_620501.1">
    <property type="nucleotide sequence ID" value="NC_003746.1"/>
</dbReference>
<dbReference type="GeneID" id="944308"/>
<dbReference type="KEGG" id="vg:944308"/>
<dbReference type="Proteomes" id="UP000002325">
    <property type="component" value="Genome"/>
</dbReference>
<dbReference type="GO" id="GO:0044423">
    <property type="term" value="C:virion component"/>
    <property type="evidence" value="ECO:0007669"/>
    <property type="project" value="UniProtKB-KW"/>
</dbReference>
<accession>O70791</accession>
<proteinExistence type="evidence at protein level"/>
<feature type="chain" id="PRO_0000299226" description="Protein 6">
    <location>
        <begin position="1"/>
        <end position="93"/>
    </location>
</feature>
<feature type="region of interest" description="Disordered" evidence="1">
    <location>
        <begin position="1"/>
        <end position="52"/>
    </location>
</feature>
<feature type="compositionally biased region" description="Polar residues" evidence="1">
    <location>
        <begin position="1"/>
        <end position="16"/>
    </location>
</feature>
<keyword id="KW-1185">Reference proteome</keyword>
<keyword id="KW-0946">Virion</keyword>
<gene>
    <name type="primary">6</name>
</gene>
<organism>
    <name type="scientific">Rice yellow stunt virus</name>
    <name type="common">RYSV</name>
    <name type="synonym">Rice transitory yellowing virus</name>
    <dbReference type="NCBI Taxonomy" id="59380"/>
    <lineage>
        <taxon>Viruses</taxon>
        <taxon>Riboviria</taxon>
        <taxon>Orthornavirae</taxon>
        <taxon>Negarnaviricota</taxon>
        <taxon>Haploviricotina</taxon>
        <taxon>Monjiviricetes</taxon>
        <taxon>Mononegavirales</taxon>
        <taxon>Rhabdoviridae</taxon>
        <taxon>Betarhabdovirinae</taxon>
        <taxon>Alphanucleorhabdovirus</taxon>
        <taxon>Alphanucleorhabdovirus oryzae</taxon>
    </lineage>
</organism>
<organismHost>
    <name type="scientific">Oryza sativa</name>
    <name type="common">Rice</name>
    <dbReference type="NCBI Taxonomy" id="4530"/>
</organismHost>
<protein>
    <recommendedName>
        <fullName>Protein 6</fullName>
    </recommendedName>
</protein>
<comment type="subcellular location">
    <subcellularLocation>
        <location>Virion</location>
    </subcellularLocation>
</comment>
<sequence length="93" mass="10543">MSSQQETNDKSNTQGHPETDPEGKTGTDTGNTEDSPPDTDNVPITDDAIMDDVMDEDVKEEDIDYSWIEDMRDEDVDAEWLFELIDECNGWPD</sequence>
<name>VP6_RYSV</name>